<dbReference type="EC" id="2.3.1.47" evidence="1"/>
<dbReference type="EMBL" id="CU928163">
    <property type="protein sequence ID" value="CAR12127.1"/>
    <property type="molecule type" value="Genomic_DNA"/>
</dbReference>
<dbReference type="RefSeq" id="WP_000118805.1">
    <property type="nucleotide sequence ID" value="NC_011751.1"/>
</dbReference>
<dbReference type="RefSeq" id="YP_002411672.1">
    <property type="nucleotide sequence ID" value="NC_011751.1"/>
</dbReference>
<dbReference type="SMR" id="B7NA75"/>
<dbReference type="STRING" id="585056.ECUMN_0918"/>
<dbReference type="KEGG" id="eum:ECUMN_0918"/>
<dbReference type="PATRIC" id="fig|585056.7.peg.1113"/>
<dbReference type="HOGENOM" id="CLU_015846_11_2_6"/>
<dbReference type="UniPathway" id="UPA00078"/>
<dbReference type="Proteomes" id="UP000007097">
    <property type="component" value="Chromosome"/>
</dbReference>
<dbReference type="GO" id="GO:0008710">
    <property type="term" value="F:8-amino-7-oxononanoate synthase activity"/>
    <property type="evidence" value="ECO:0007669"/>
    <property type="project" value="UniProtKB-UniRule"/>
</dbReference>
<dbReference type="GO" id="GO:0030170">
    <property type="term" value="F:pyridoxal phosphate binding"/>
    <property type="evidence" value="ECO:0007669"/>
    <property type="project" value="UniProtKB-UniRule"/>
</dbReference>
<dbReference type="GO" id="GO:0009102">
    <property type="term" value="P:biotin biosynthetic process"/>
    <property type="evidence" value="ECO:0007669"/>
    <property type="project" value="UniProtKB-UniRule"/>
</dbReference>
<dbReference type="CDD" id="cd06454">
    <property type="entry name" value="KBL_like"/>
    <property type="match status" value="1"/>
</dbReference>
<dbReference type="FunFam" id="3.40.640.10:FF:000095">
    <property type="entry name" value="8-amino-7-oxononanoate synthase"/>
    <property type="match status" value="1"/>
</dbReference>
<dbReference type="FunFam" id="3.90.1150.10:FF:000036">
    <property type="entry name" value="8-amino-7-oxononanoate synthase"/>
    <property type="match status" value="1"/>
</dbReference>
<dbReference type="Gene3D" id="3.90.1150.10">
    <property type="entry name" value="Aspartate Aminotransferase, domain 1"/>
    <property type="match status" value="1"/>
</dbReference>
<dbReference type="Gene3D" id="3.40.640.10">
    <property type="entry name" value="Type I PLP-dependent aspartate aminotransferase-like (Major domain)"/>
    <property type="match status" value="1"/>
</dbReference>
<dbReference type="HAMAP" id="MF_01693">
    <property type="entry name" value="BioF_aminotrans_2"/>
    <property type="match status" value="1"/>
</dbReference>
<dbReference type="InterPro" id="IPR001917">
    <property type="entry name" value="Aminotrans_II_pyridoxalP_BS"/>
</dbReference>
<dbReference type="InterPro" id="IPR004839">
    <property type="entry name" value="Aminotransferase_I/II_large"/>
</dbReference>
<dbReference type="InterPro" id="IPR050087">
    <property type="entry name" value="AON_synthase_class-II"/>
</dbReference>
<dbReference type="InterPro" id="IPR004723">
    <property type="entry name" value="AONS_Archaea/Proteobacteria"/>
</dbReference>
<dbReference type="InterPro" id="IPR022834">
    <property type="entry name" value="AONS_Proteobacteria"/>
</dbReference>
<dbReference type="InterPro" id="IPR015424">
    <property type="entry name" value="PyrdxlP-dep_Trfase"/>
</dbReference>
<dbReference type="InterPro" id="IPR015421">
    <property type="entry name" value="PyrdxlP-dep_Trfase_major"/>
</dbReference>
<dbReference type="InterPro" id="IPR015422">
    <property type="entry name" value="PyrdxlP-dep_Trfase_small"/>
</dbReference>
<dbReference type="NCBIfam" id="TIGR00858">
    <property type="entry name" value="bioF"/>
    <property type="match status" value="1"/>
</dbReference>
<dbReference type="PANTHER" id="PTHR13693:SF100">
    <property type="entry name" value="8-AMINO-7-OXONONANOATE SYNTHASE"/>
    <property type="match status" value="1"/>
</dbReference>
<dbReference type="PANTHER" id="PTHR13693">
    <property type="entry name" value="CLASS II AMINOTRANSFERASE/8-AMINO-7-OXONONANOATE SYNTHASE"/>
    <property type="match status" value="1"/>
</dbReference>
<dbReference type="Pfam" id="PF00155">
    <property type="entry name" value="Aminotran_1_2"/>
    <property type="match status" value="1"/>
</dbReference>
<dbReference type="SUPFAM" id="SSF53383">
    <property type="entry name" value="PLP-dependent transferases"/>
    <property type="match status" value="1"/>
</dbReference>
<dbReference type="PROSITE" id="PS00599">
    <property type="entry name" value="AA_TRANSFER_CLASS_2"/>
    <property type="match status" value="1"/>
</dbReference>
<protein>
    <recommendedName>
        <fullName evidence="1">8-amino-7-oxononanoate synthase</fullName>
        <shortName evidence="1">AONS</shortName>
        <ecNumber evidence="1">2.3.1.47</ecNumber>
    </recommendedName>
    <alternativeName>
        <fullName evidence="1">7-keto-8-amino-pelargonic acid synthase</fullName>
        <shortName evidence="1">7-KAP synthase</shortName>
        <shortName evidence="1">KAPA synthase</shortName>
    </alternativeName>
    <alternativeName>
        <fullName evidence="1">8-amino-7-ketopelargonate synthase</fullName>
    </alternativeName>
</protein>
<evidence type="ECO:0000255" key="1">
    <source>
        <dbReference type="HAMAP-Rule" id="MF_01693"/>
    </source>
</evidence>
<organism>
    <name type="scientific">Escherichia coli O17:K52:H18 (strain UMN026 / ExPEC)</name>
    <dbReference type="NCBI Taxonomy" id="585056"/>
    <lineage>
        <taxon>Bacteria</taxon>
        <taxon>Pseudomonadati</taxon>
        <taxon>Pseudomonadota</taxon>
        <taxon>Gammaproteobacteria</taxon>
        <taxon>Enterobacterales</taxon>
        <taxon>Enterobacteriaceae</taxon>
        <taxon>Escherichia</taxon>
    </lineage>
</organism>
<feature type="chain" id="PRO_0000380982" description="8-amino-7-oxononanoate synthase">
    <location>
        <begin position="1"/>
        <end position="384"/>
    </location>
</feature>
<feature type="binding site" evidence="1">
    <location>
        <position position="21"/>
    </location>
    <ligand>
        <name>substrate</name>
    </ligand>
</feature>
<feature type="binding site" evidence="1">
    <location>
        <begin position="108"/>
        <end position="109"/>
    </location>
    <ligand>
        <name>pyridoxal 5'-phosphate</name>
        <dbReference type="ChEBI" id="CHEBI:597326"/>
    </ligand>
</feature>
<feature type="binding site" evidence="1">
    <location>
        <position position="133"/>
    </location>
    <ligand>
        <name>substrate</name>
    </ligand>
</feature>
<feature type="binding site" evidence="1">
    <location>
        <position position="179"/>
    </location>
    <ligand>
        <name>pyridoxal 5'-phosphate</name>
        <dbReference type="ChEBI" id="CHEBI:597326"/>
    </ligand>
</feature>
<feature type="binding site" evidence="1">
    <location>
        <position position="207"/>
    </location>
    <ligand>
        <name>pyridoxal 5'-phosphate</name>
        <dbReference type="ChEBI" id="CHEBI:597326"/>
    </ligand>
</feature>
<feature type="binding site" evidence="1">
    <location>
        <position position="233"/>
    </location>
    <ligand>
        <name>pyridoxal 5'-phosphate</name>
        <dbReference type="ChEBI" id="CHEBI:597326"/>
    </ligand>
</feature>
<feature type="binding site" evidence="1">
    <location>
        <position position="352"/>
    </location>
    <ligand>
        <name>substrate</name>
    </ligand>
</feature>
<feature type="modified residue" description="N6-(pyridoxal phosphate)lysine" evidence="1">
    <location>
        <position position="236"/>
    </location>
</feature>
<accession>B7NA75</accession>
<proteinExistence type="inferred from homology"/>
<keyword id="KW-0093">Biotin biosynthesis</keyword>
<keyword id="KW-0663">Pyridoxal phosphate</keyword>
<keyword id="KW-0808">Transferase</keyword>
<sequence>MSWQEKINAALDARRAADALRRRYPVAQGAGRWLVADDRQYLNFSCNDYLGLSHHPDIIRAWKQGAEQFGVGSGGSGHVSGYSVAHQALEEELAEWLGYSRALLFISGFAANQAVITAMTAKEDRIVADRLSHASLLEAASLSPAQLRRFTHNDVAHLARLLASPCPGQQLVVTEGVFSMDGDSAPLAEIQQVTQQHNGWLMVDDAHGTGVIGEQGRGSCWLQKVNPELLVVTFGKGFGVSGAAVLCSDAVADYLLQFARHLIYSTSMPPAQAQALRASLAVIRSDEGDARREKLAALITRFRAGVQDLPFTLADSCSAIQPLIVGDNSRALQLAEKLRQQGCWVTAIRPPTVPAGTARLRLTLTAAHEMQDIDRLLEVLHGNG</sequence>
<name>BIOF_ECOLU</name>
<reference key="1">
    <citation type="journal article" date="2009" name="PLoS Genet.">
        <title>Organised genome dynamics in the Escherichia coli species results in highly diverse adaptive paths.</title>
        <authorList>
            <person name="Touchon M."/>
            <person name="Hoede C."/>
            <person name="Tenaillon O."/>
            <person name="Barbe V."/>
            <person name="Baeriswyl S."/>
            <person name="Bidet P."/>
            <person name="Bingen E."/>
            <person name="Bonacorsi S."/>
            <person name="Bouchier C."/>
            <person name="Bouvet O."/>
            <person name="Calteau A."/>
            <person name="Chiapello H."/>
            <person name="Clermont O."/>
            <person name="Cruveiller S."/>
            <person name="Danchin A."/>
            <person name="Diard M."/>
            <person name="Dossat C."/>
            <person name="Karoui M.E."/>
            <person name="Frapy E."/>
            <person name="Garry L."/>
            <person name="Ghigo J.M."/>
            <person name="Gilles A.M."/>
            <person name="Johnson J."/>
            <person name="Le Bouguenec C."/>
            <person name="Lescat M."/>
            <person name="Mangenot S."/>
            <person name="Martinez-Jehanne V."/>
            <person name="Matic I."/>
            <person name="Nassif X."/>
            <person name="Oztas S."/>
            <person name="Petit M.A."/>
            <person name="Pichon C."/>
            <person name="Rouy Z."/>
            <person name="Ruf C.S."/>
            <person name="Schneider D."/>
            <person name="Tourret J."/>
            <person name="Vacherie B."/>
            <person name="Vallenet D."/>
            <person name="Medigue C."/>
            <person name="Rocha E.P.C."/>
            <person name="Denamur E."/>
        </authorList>
    </citation>
    <scope>NUCLEOTIDE SEQUENCE [LARGE SCALE GENOMIC DNA]</scope>
    <source>
        <strain>UMN026 / ExPEC</strain>
    </source>
</reference>
<gene>
    <name evidence="1" type="primary">bioF</name>
    <name type="ordered locus">ECUMN_0918</name>
</gene>
<comment type="function">
    <text evidence="1">Catalyzes the decarboxylative condensation of pimeloyl-[acyl-carrier protein] and L-alanine to produce 8-amino-7-oxononanoate (AON), [acyl-carrier protein], and carbon dioxide.</text>
</comment>
<comment type="catalytic activity">
    <reaction evidence="1">
        <text>6-carboxyhexanoyl-[ACP] + L-alanine + H(+) = (8S)-8-amino-7-oxononanoate + holo-[ACP] + CO2</text>
        <dbReference type="Rhea" id="RHEA:42288"/>
        <dbReference type="Rhea" id="RHEA-COMP:9685"/>
        <dbReference type="Rhea" id="RHEA-COMP:9955"/>
        <dbReference type="ChEBI" id="CHEBI:15378"/>
        <dbReference type="ChEBI" id="CHEBI:16526"/>
        <dbReference type="ChEBI" id="CHEBI:57972"/>
        <dbReference type="ChEBI" id="CHEBI:64479"/>
        <dbReference type="ChEBI" id="CHEBI:78846"/>
        <dbReference type="ChEBI" id="CHEBI:149468"/>
        <dbReference type="EC" id="2.3.1.47"/>
    </reaction>
</comment>
<comment type="cofactor">
    <cofactor evidence="1">
        <name>pyridoxal 5'-phosphate</name>
        <dbReference type="ChEBI" id="CHEBI:597326"/>
    </cofactor>
</comment>
<comment type="pathway">
    <text evidence="1">Cofactor biosynthesis; biotin biosynthesis.</text>
</comment>
<comment type="subunit">
    <text evidence="1">Homodimer.</text>
</comment>
<comment type="similarity">
    <text evidence="1">Belongs to the class-II pyridoxal-phosphate-dependent aminotransferase family. BioF subfamily.</text>
</comment>